<sequence length="311" mass="34356">MILRRTLPRLASAKDGSGGGFADGHFPSLRGHPAARANARDAAEKQAALAAKEEEIRDHRRGDAAAASPAPSTVKEFRVYRWSPDAPSRRPHLQSYHVDLATCGPMVLDVLQKIKAEHDATLAFRRSCREGICGSCSMCIDGVNTVACLRPVDTDTSSATTVTPLPHMYVVRDLVVDLTSFYQQYKSVEPWLKRKTKTKTETTEHAQSPEERKRLDGLYECILCACCSAACPSYWWNAEAFLGPAALLHAYRWVSDSRDEYAAERVQALAEGWDKLYRCRMIKSCTATCPKSLDPAAAISAMKTLHQLGKP</sequence>
<dbReference type="EC" id="1.3.5.1" evidence="8"/>
<dbReference type="EMBL" id="AP005872">
    <property type="protein sequence ID" value="BAD26386.1"/>
    <property type="molecule type" value="Genomic_DNA"/>
</dbReference>
<dbReference type="EMBL" id="AP008215">
    <property type="protein sequence ID" value="BAF24932.1"/>
    <property type="molecule type" value="Genomic_DNA"/>
</dbReference>
<dbReference type="EMBL" id="AP014965">
    <property type="protein sequence ID" value="BAT07766.1"/>
    <property type="molecule type" value="Genomic_DNA"/>
</dbReference>
<dbReference type="RefSeq" id="XP_015611366.1">
    <property type="nucleotide sequence ID" value="XM_015755880.1"/>
</dbReference>
<dbReference type="SMR" id="Q6H4G3"/>
<dbReference type="FunCoup" id="Q6H4G3">
    <property type="interactions" value="231"/>
</dbReference>
<dbReference type="STRING" id="39947.Q6H4G3"/>
<dbReference type="PaxDb" id="39947-Q6H4G3"/>
<dbReference type="EnsemblPlants" id="Os09t0370300-01">
    <property type="protein sequence ID" value="Os09t0370300-01"/>
    <property type="gene ID" value="Os09g0370300"/>
</dbReference>
<dbReference type="GeneID" id="4346890"/>
<dbReference type="Gramene" id="Os09t0370300-01">
    <property type="protein sequence ID" value="Os09t0370300-01"/>
    <property type="gene ID" value="Os09g0370300"/>
</dbReference>
<dbReference type="KEGG" id="dosa:Os09g0370300"/>
<dbReference type="KEGG" id="osa:4346890"/>
<dbReference type="eggNOG" id="KOG3049">
    <property type="taxonomic scope" value="Eukaryota"/>
</dbReference>
<dbReference type="HOGENOM" id="CLU_044838_0_3_1"/>
<dbReference type="InParanoid" id="Q6H4G3"/>
<dbReference type="OMA" id="MVMVRHA"/>
<dbReference type="OrthoDB" id="1696654at2759"/>
<dbReference type="PlantReactome" id="R-OSA-1119533">
    <property type="pathway name" value="TCA cycle (plant)"/>
</dbReference>
<dbReference type="UniPathway" id="UPA00223">
    <property type="reaction ID" value="UER01006"/>
</dbReference>
<dbReference type="Proteomes" id="UP000000763">
    <property type="component" value="Chromosome 9"/>
</dbReference>
<dbReference type="Proteomes" id="UP000059680">
    <property type="component" value="Chromosome 9"/>
</dbReference>
<dbReference type="GO" id="GO:0005743">
    <property type="term" value="C:mitochondrial inner membrane"/>
    <property type="evidence" value="ECO:0007669"/>
    <property type="project" value="UniProtKB-SubCell"/>
</dbReference>
<dbReference type="GO" id="GO:0005739">
    <property type="term" value="C:mitochondrion"/>
    <property type="evidence" value="ECO:0000318"/>
    <property type="project" value="GO_Central"/>
</dbReference>
<dbReference type="GO" id="GO:0045273">
    <property type="term" value="C:respiratory chain complex II (succinate dehydrogenase)"/>
    <property type="evidence" value="ECO:0000314"/>
    <property type="project" value="UniProtKB"/>
</dbReference>
<dbReference type="GO" id="GO:0051537">
    <property type="term" value="F:2 iron, 2 sulfur cluster binding"/>
    <property type="evidence" value="ECO:0007669"/>
    <property type="project" value="UniProtKB-KW"/>
</dbReference>
<dbReference type="GO" id="GO:0051538">
    <property type="term" value="F:3 iron, 4 sulfur cluster binding"/>
    <property type="evidence" value="ECO:0007669"/>
    <property type="project" value="UniProtKB-KW"/>
</dbReference>
<dbReference type="GO" id="GO:0051539">
    <property type="term" value="F:4 iron, 4 sulfur cluster binding"/>
    <property type="evidence" value="ECO:0007669"/>
    <property type="project" value="UniProtKB-KW"/>
</dbReference>
<dbReference type="GO" id="GO:0009055">
    <property type="term" value="F:electron transfer activity"/>
    <property type="evidence" value="ECO:0007669"/>
    <property type="project" value="InterPro"/>
</dbReference>
<dbReference type="GO" id="GO:0046872">
    <property type="term" value="F:metal ion binding"/>
    <property type="evidence" value="ECO:0007669"/>
    <property type="project" value="UniProtKB-KW"/>
</dbReference>
<dbReference type="GO" id="GO:0008177">
    <property type="term" value="F:succinate dehydrogenase (quinone) activity"/>
    <property type="evidence" value="ECO:0007669"/>
    <property type="project" value="UniProtKB-EC"/>
</dbReference>
<dbReference type="GO" id="GO:0009060">
    <property type="term" value="P:aerobic respiration"/>
    <property type="evidence" value="ECO:0000318"/>
    <property type="project" value="GO_Central"/>
</dbReference>
<dbReference type="GO" id="GO:0022904">
    <property type="term" value="P:respiratory electron transport chain"/>
    <property type="evidence" value="ECO:0000318"/>
    <property type="project" value="GO_Central"/>
</dbReference>
<dbReference type="GO" id="GO:0006099">
    <property type="term" value="P:tricarboxylic acid cycle"/>
    <property type="evidence" value="ECO:0007669"/>
    <property type="project" value="UniProtKB-UniPathway"/>
</dbReference>
<dbReference type="FunFam" id="3.10.20.30:FF:000007">
    <property type="entry name" value="Succinate dehydrogenase [ubiquinone] iron-sulfur subunit, mitochondrial"/>
    <property type="match status" value="1"/>
</dbReference>
<dbReference type="FunFam" id="1.10.1060.10:FF:000001">
    <property type="entry name" value="Succinate dehydrogenase iron-sulfur subunit SdhB"/>
    <property type="match status" value="1"/>
</dbReference>
<dbReference type="Gene3D" id="3.10.20.30">
    <property type="match status" value="1"/>
</dbReference>
<dbReference type="Gene3D" id="1.10.1060.10">
    <property type="entry name" value="Alpha-helical ferredoxin"/>
    <property type="match status" value="1"/>
</dbReference>
<dbReference type="InterPro" id="IPR036010">
    <property type="entry name" value="2Fe-2S_ferredoxin-like_sf"/>
</dbReference>
<dbReference type="InterPro" id="IPR006058">
    <property type="entry name" value="2Fe2S_fd_BS"/>
</dbReference>
<dbReference type="InterPro" id="IPR017896">
    <property type="entry name" value="4Fe4S_Fe-S-bd"/>
</dbReference>
<dbReference type="InterPro" id="IPR017900">
    <property type="entry name" value="4Fe4S_Fe_S_CS"/>
</dbReference>
<dbReference type="InterPro" id="IPR012675">
    <property type="entry name" value="Beta-grasp_dom_sf"/>
</dbReference>
<dbReference type="InterPro" id="IPR009051">
    <property type="entry name" value="Helical_ferredxn"/>
</dbReference>
<dbReference type="InterPro" id="IPR050573">
    <property type="entry name" value="SDH/FRD_Iron-Sulfur"/>
</dbReference>
<dbReference type="InterPro" id="IPR004489">
    <property type="entry name" value="Succ_DH/fum_Rdtase_Fe-S"/>
</dbReference>
<dbReference type="InterPro" id="IPR025192">
    <property type="entry name" value="Succ_DH/fum_Rdtase_N"/>
</dbReference>
<dbReference type="NCBIfam" id="TIGR00384">
    <property type="entry name" value="dhsB"/>
    <property type="match status" value="1"/>
</dbReference>
<dbReference type="NCBIfam" id="NF004616">
    <property type="entry name" value="PRK05950.1"/>
    <property type="match status" value="1"/>
</dbReference>
<dbReference type="PANTHER" id="PTHR11921:SF40">
    <property type="entry name" value="SUCCINATE DEHYDROGENASE [UBIQUINONE] IRON-SULFUR SUBUNIT 3, MITOCHONDRIAL"/>
    <property type="match status" value="1"/>
</dbReference>
<dbReference type="PANTHER" id="PTHR11921">
    <property type="entry name" value="SUCCINATE DEHYDROGENASE IRON-SULFUR PROTEIN"/>
    <property type="match status" value="1"/>
</dbReference>
<dbReference type="Pfam" id="PF13085">
    <property type="entry name" value="Fer2_3"/>
    <property type="match status" value="1"/>
</dbReference>
<dbReference type="Pfam" id="PF13183">
    <property type="entry name" value="Fer4_8"/>
    <property type="match status" value="1"/>
</dbReference>
<dbReference type="SUPFAM" id="SSF54292">
    <property type="entry name" value="2Fe-2S ferredoxin-like"/>
    <property type="match status" value="1"/>
</dbReference>
<dbReference type="SUPFAM" id="SSF46548">
    <property type="entry name" value="alpha-helical ferredoxin"/>
    <property type="match status" value="1"/>
</dbReference>
<dbReference type="PROSITE" id="PS00197">
    <property type="entry name" value="2FE2S_FER_1"/>
    <property type="match status" value="1"/>
</dbReference>
<dbReference type="PROSITE" id="PS00198">
    <property type="entry name" value="4FE4S_FER_1"/>
    <property type="match status" value="1"/>
</dbReference>
<dbReference type="PROSITE" id="PS51379">
    <property type="entry name" value="4FE4S_FER_2"/>
    <property type="match status" value="1"/>
</dbReference>
<reference key="1">
    <citation type="journal article" date="2005" name="Nature">
        <title>The map-based sequence of the rice genome.</title>
        <authorList>
            <consortium name="International rice genome sequencing project (IRGSP)"/>
        </authorList>
    </citation>
    <scope>NUCLEOTIDE SEQUENCE [LARGE SCALE GENOMIC DNA]</scope>
    <source>
        <strain>cv. Nipponbare</strain>
    </source>
</reference>
<reference key="2">
    <citation type="journal article" date="2008" name="Nucleic Acids Res.">
        <title>The rice annotation project database (RAP-DB): 2008 update.</title>
        <authorList>
            <consortium name="The rice annotation project (RAP)"/>
        </authorList>
    </citation>
    <scope>GENOME REANNOTATION</scope>
    <source>
        <strain>cv. Nipponbare</strain>
    </source>
</reference>
<reference key="3">
    <citation type="journal article" date="2013" name="Rice">
        <title>Improvement of the Oryza sativa Nipponbare reference genome using next generation sequence and optical map data.</title>
        <authorList>
            <person name="Kawahara Y."/>
            <person name="de la Bastide M."/>
            <person name="Hamilton J.P."/>
            <person name="Kanamori H."/>
            <person name="McCombie W.R."/>
            <person name="Ouyang S."/>
            <person name="Schwartz D.C."/>
            <person name="Tanaka T."/>
            <person name="Wu J."/>
            <person name="Zhou S."/>
            <person name="Childs K.L."/>
            <person name="Davidson R.M."/>
            <person name="Lin H."/>
            <person name="Quesada-Ocampo L."/>
            <person name="Vaillancourt B."/>
            <person name="Sakai H."/>
            <person name="Lee S.S."/>
            <person name="Kim J."/>
            <person name="Numa H."/>
            <person name="Itoh T."/>
            <person name="Buell C.R."/>
            <person name="Matsumoto T."/>
        </authorList>
    </citation>
    <scope>GENOME REANNOTATION</scope>
    <source>
        <strain>cv. Nipponbare</strain>
    </source>
</reference>
<reference key="4">
    <citation type="journal article" date="2010" name="Plant Mol. Biol.">
        <title>Functional and composition differences between mitochondrial complex II in Arabidopsis and rice are correlated with the complex genetic history of the enzyme.</title>
        <authorList>
            <person name="Huang S."/>
            <person name="Taylor N.L."/>
            <person name="Narsai R."/>
            <person name="Eubel H."/>
            <person name="Whelan J."/>
            <person name="Millar A.H."/>
        </authorList>
    </citation>
    <scope>SUBUNIT</scope>
</reference>
<proteinExistence type="evidence at protein level"/>
<feature type="transit peptide" description="Mitochondrion" evidence="3">
    <location>
        <begin position="1"/>
        <end position="63"/>
    </location>
</feature>
<feature type="chain" id="PRO_0000431744" description="Succinate dehydrogenase [ubiquinone] iron-sulfur subunit 2, mitochondrial" evidence="3">
    <location>
        <begin position="64"/>
        <end position="311"/>
    </location>
</feature>
<feature type="domain" description="2Fe-2S ferredoxin-type" evidence="4">
    <location>
        <begin position="77"/>
        <end position="168"/>
    </location>
</feature>
<feature type="domain" description="4Fe-4S ferredoxin-type" evidence="5">
    <location>
        <begin position="211"/>
        <end position="241"/>
    </location>
</feature>
<feature type="region of interest" description="Disordered" evidence="6">
    <location>
        <begin position="1"/>
        <end position="70"/>
    </location>
</feature>
<feature type="compositionally biased region" description="Basic and acidic residues" evidence="6">
    <location>
        <begin position="51"/>
        <end position="63"/>
    </location>
</feature>
<feature type="binding site" evidence="1">
    <location>
        <position position="128"/>
    </location>
    <ligand>
        <name>[2Fe-2S] cluster</name>
        <dbReference type="ChEBI" id="CHEBI:190135"/>
    </ligand>
</feature>
<feature type="binding site" evidence="1">
    <location>
        <position position="133"/>
    </location>
    <ligand>
        <name>[2Fe-2S] cluster</name>
        <dbReference type="ChEBI" id="CHEBI:190135"/>
    </ligand>
</feature>
<feature type="binding site" evidence="1">
    <location>
        <position position="148"/>
    </location>
    <ligand>
        <name>[2Fe-2S] cluster</name>
        <dbReference type="ChEBI" id="CHEBI:190135"/>
    </ligand>
</feature>
<feature type="binding site" evidence="1">
    <location>
        <position position="221"/>
    </location>
    <ligand>
        <name>[4Fe-4S] cluster</name>
        <dbReference type="ChEBI" id="CHEBI:49883"/>
    </ligand>
</feature>
<feature type="binding site" evidence="1">
    <location>
        <position position="224"/>
    </location>
    <ligand>
        <name>[4Fe-4S] cluster</name>
        <dbReference type="ChEBI" id="CHEBI:49883"/>
    </ligand>
</feature>
<feature type="binding site" evidence="1">
    <location>
        <position position="227"/>
    </location>
    <ligand>
        <name>[4Fe-4S] cluster</name>
        <dbReference type="ChEBI" id="CHEBI:49883"/>
    </ligand>
</feature>
<feature type="binding site" evidence="1">
    <location>
        <position position="231"/>
    </location>
    <ligand>
        <name>[3Fe-4S] cluster</name>
        <dbReference type="ChEBI" id="CHEBI:21137"/>
    </ligand>
</feature>
<feature type="binding site" evidence="1">
    <location>
        <position position="236"/>
    </location>
    <ligand>
        <name>a ubiquinone</name>
        <dbReference type="ChEBI" id="CHEBI:16389"/>
        <note>ligand shared with SdhD subunit</note>
    </ligand>
</feature>
<feature type="binding site" evidence="1">
    <location>
        <position position="279"/>
    </location>
    <ligand>
        <name>[3Fe-4S] cluster</name>
        <dbReference type="ChEBI" id="CHEBI:21137"/>
    </ligand>
</feature>
<feature type="binding site" evidence="1">
    <location>
        <position position="285"/>
    </location>
    <ligand>
        <name>[3Fe-4S] cluster</name>
        <dbReference type="ChEBI" id="CHEBI:21137"/>
    </ligand>
</feature>
<feature type="binding site" evidence="1">
    <location>
        <position position="289"/>
    </location>
    <ligand>
        <name>[4Fe-4S] cluster</name>
        <dbReference type="ChEBI" id="CHEBI:49883"/>
    </ligand>
</feature>
<accession>Q6H4G3</accession>
<accession>A0A0P0XKU9</accession>
<gene>
    <name evidence="8" type="primary">SDH2-2</name>
    <name evidence="10" type="ordered locus">Os09g0370300</name>
    <name evidence="8" type="ordered locus">LOC_Os09g20440</name>
    <name evidence="9" type="ORF">B1168F12.7</name>
</gene>
<evidence type="ECO:0000250" key="1">
    <source>
        <dbReference type="UniProtKB" id="P07014"/>
    </source>
</evidence>
<evidence type="ECO:0000250" key="2">
    <source>
        <dbReference type="UniProtKB" id="Q8LBZ7"/>
    </source>
</evidence>
<evidence type="ECO:0000255" key="3"/>
<evidence type="ECO:0000255" key="4">
    <source>
        <dbReference type="PROSITE-ProRule" id="PRU00465"/>
    </source>
</evidence>
<evidence type="ECO:0000255" key="5">
    <source>
        <dbReference type="PROSITE-ProRule" id="PRU00711"/>
    </source>
</evidence>
<evidence type="ECO:0000256" key="6">
    <source>
        <dbReference type="SAM" id="MobiDB-lite"/>
    </source>
</evidence>
<evidence type="ECO:0000269" key="7">
    <source>
    </source>
</evidence>
<evidence type="ECO:0000305" key="8"/>
<evidence type="ECO:0000312" key="9">
    <source>
        <dbReference type="EMBL" id="BAD26386.1"/>
    </source>
</evidence>
<evidence type="ECO:0000312" key="10">
    <source>
        <dbReference type="EMBL" id="BAF24932.1"/>
    </source>
</evidence>
<name>SDHB2_ORYSJ</name>
<comment type="function">
    <text evidence="2">Iron-sulfur protein (IP) subunit of succinate dehydrogenase (SDH) that is involved in complex II of the mitochondrial electron transport chain and is responsible for transferring electrons from succinate to ubiquinone (coenzyme Q).</text>
</comment>
<comment type="catalytic activity">
    <reaction evidence="8">
        <text>a quinone + succinate = fumarate + a quinol</text>
        <dbReference type="Rhea" id="RHEA:40523"/>
        <dbReference type="ChEBI" id="CHEBI:24646"/>
        <dbReference type="ChEBI" id="CHEBI:29806"/>
        <dbReference type="ChEBI" id="CHEBI:30031"/>
        <dbReference type="ChEBI" id="CHEBI:132124"/>
        <dbReference type="EC" id="1.3.5.1"/>
    </reaction>
</comment>
<comment type="cofactor">
    <cofactor evidence="1">
        <name>[2Fe-2S] cluster</name>
        <dbReference type="ChEBI" id="CHEBI:190135"/>
    </cofactor>
    <text evidence="1">Binds 1 [2Fe-2S] cluster.</text>
</comment>
<comment type="cofactor">
    <cofactor evidence="1">
        <name>[3Fe-4S] cluster</name>
        <dbReference type="ChEBI" id="CHEBI:21137"/>
    </cofactor>
    <text evidence="1">Binds 1 [3Fe-4S] cluster.</text>
</comment>
<comment type="cofactor">
    <cofactor evidence="1">
        <name>[4Fe-4S] cluster</name>
        <dbReference type="ChEBI" id="CHEBI:49883"/>
    </cofactor>
    <text evidence="1">Binds 1 [4Fe-4S] cluster.</text>
</comment>
<comment type="pathway">
    <text evidence="8">Carbohydrate metabolism; tricarboxylic acid cycle; fumarate from succinate (eukaryal route): step 1/1.</text>
</comment>
<comment type="subunit">
    <text evidence="7">Component of complex II composed of eight subunits in plants: four classical SDH subunits SDH1, SDH2, SDH3 and SDH4 (a flavoprotein (FP), an iron-sulfur protein (IP), and a cytochrome b composed of a large and a small subunit.), as well as four subunits unknown in mitochondria from bacteria and heterotrophic eukaryotes.</text>
</comment>
<comment type="subcellular location">
    <subcellularLocation>
        <location evidence="2">Mitochondrion inner membrane</location>
        <topology evidence="2">Peripheral membrane protein</topology>
        <orientation evidence="2">Matrix side</orientation>
    </subcellularLocation>
</comment>
<comment type="similarity">
    <text evidence="8">Belongs to the succinate dehydrogenase/fumarate reductase iron-sulfur protein family.</text>
</comment>
<organism>
    <name type="scientific">Oryza sativa subsp. japonica</name>
    <name type="common">Rice</name>
    <dbReference type="NCBI Taxonomy" id="39947"/>
    <lineage>
        <taxon>Eukaryota</taxon>
        <taxon>Viridiplantae</taxon>
        <taxon>Streptophyta</taxon>
        <taxon>Embryophyta</taxon>
        <taxon>Tracheophyta</taxon>
        <taxon>Spermatophyta</taxon>
        <taxon>Magnoliopsida</taxon>
        <taxon>Liliopsida</taxon>
        <taxon>Poales</taxon>
        <taxon>Poaceae</taxon>
        <taxon>BOP clade</taxon>
        <taxon>Oryzoideae</taxon>
        <taxon>Oryzeae</taxon>
        <taxon>Oryzinae</taxon>
        <taxon>Oryza</taxon>
        <taxon>Oryza sativa</taxon>
    </lineage>
</organism>
<protein>
    <recommendedName>
        <fullName>Succinate dehydrogenase [ubiquinone] iron-sulfur subunit 2, mitochondrial</fullName>
        <ecNumber evidence="8">1.3.5.1</ecNumber>
    </recommendedName>
    <alternativeName>
        <fullName>Iron-sulfur subunit of complex II</fullName>
        <shortName>Ip</shortName>
    </alternativeName>
</protein>
<keyword id="KW-0001">2Fe-2S</keyword>
<keyword id="KW-0003">3Fe-4S</keyword>
<keyword id="KW-0004">4Fe-4S</keyword>
<keyword id="KW-0249">Electron transport</keyword>
<keyword id="KW-0408">Iron</keyword>
<keyword id="KW-0411">Iron-sulfur</keyword>
<keyword id="KW-0472">Membrane</keyword>
<keyword id="KW-0479">Metal-binding</keyword>
<keyword id="KW-0496">Mitochondrion</keyword>
<keyword id="KW-0999">Mitochondrion inner membrane</keyword>
<keyword id="KW-0560">Oxidoreductase</keyword>
<keyword id="KW-1185">Reference proteome</keyword>
<keyword id="KW-0809">Transit peptide</keyword>
<keyword id="KW-0813">Transport</keyword>
<keyword id="KW-0816">Tricarboxylic acid cycle</keyword>